<evidence type="ECO:0000250" key="1">
    <source>
        <dbReference type="UniProtKB" id="Q8BTQ0"/>
    </source>
</evidence>
<evidence type="ECO:0000255" key="2">
    <source>
        <dbReference type="PROSITE-ProRule" id="PRU00175"/>
    </source>
</evidence>
<evidence type="ECO:0000256" key="3">
    <source>
        <dbReference type="SAM" id="MobiDB-lite"/>
    </source>
</evidence>
<evidence type="ECO:0000269" key="4">
    <source>
    </source>
</evidence>
<evidence type="ECO:0000269" key="5">
    <source>
    </source>
</evidence>
<evidence type="ECO:0000269" key="6">
    <source>
    </source>
</evidence>
<evidence type="ECO:0000303" key="7">
    <source ref="1"/>
</evidence>
<accession>Q3KNV8</accession>
<accession>D3DVN1</accession>
<accession>O15262</accession>
<reference key="1">
    <citation type="submission" date="1997-09" db="EMBL/GenBank/DDBJ databases">
        <title>Interactions of the BCL7A protein with novel ring finger proteins.</title>
        <authorList>
            <person name="Abdul-Rauf M."/>
            <person name="Dyer M.J."/>
        </authorList>
    </citation>
    <scope>NUCLEOTIDE SEQUENCE [MRNA] (ISOFORM 2)</scope>
</reference>
<reference key="2">
    <citation type="submission" date="2005-09" db="EMBL/GenBank/DDBJ databases">
        <authorList>
            <person name="Mural R.J."/>
            <person name="Istrail S."/>
            <person name="Sutton G.G."/>
            <person name="Florea L."/>
            <person name="Halpern A.L."/>
            <person name="Mobarry C.M."/>
            <person name="Lippert R."/>
            <person name="Walenz B."/>
            <person name="Shatkay H."/>
            <person name="Dew I."/>
            <person name="Miller J.R."/>
            <person name="Flanigan M.J."/>
            <person name="Edwards N.J."/>
            <person name="Bolanos R."/>
            <person name="Fasulo D."/>
            <person name="Halldorsson B.V."/>
            <person name="Hannenhalli S."/>
            <person name="Turner R."/>
            <person name="Yooseph S."/>
            <person name="Lu F."/>
            <person name="Nusskern D.R."/>
            <person name="Shue B.C."/>
            <person name="Zheng X.H."/>
            <person name="Zhong F."/>
            <person name="Delcher A.L."/>
            <person name="Huson D.H."/>
            <person name="Kravitz S.A."/>
            <person name="Mouchard L."/>
            <person name="Reinert K."/>
            <person name="Remington K.A."/>
            <person name="Clark A.G."/>
            <person name="Waterman M.S."/>
            <person name="Eichler E.E."/>
            <person name="Adams M.D."/>
            <person name="Hunkapiller M.W."/>
            <person name="Myers E.W."/>
            <person name="Venter J.C."/>
        </authorList>
    </citation>
    <scope>NUCLEOTIDE SEQUENCE [LARGE SCALE GENOMIC DNA]</scope>
</reference>
<reference key="3">
    <citation type="journal article" date="2004" name="Genome Res.">
        <title>The status, quality, and expansion of the NIH full-length cDNA project: the Mammalian Gene Collection (MGC).</title>
        <authorList>
            <consortium name="The MGC Project Team"/>
        </authorList>
    </citation>
    <scope>NUCLEOTIDE SEQUENCE [LARGE SCALE MRNA] (ISOFORM 1)</scope>
</reference>
<reference key="4">
    <citation type="journal article" date="2011" name="Mol. Cell. Proteomics">
        <title>Interaction proteomics analysis of polycomb proteins defines distinct PRC1 Complexes in mammalian cells.</title>
        <authorList>
            <person name="Vandamme J."/>
            <person name="Volkel P."/>
            <person name="Rosnoblet C."/>
            <person name="Le Faou P."/>
            <person name="Angrand P.O."/>
        </authorList>
    </citation>
    <scope>IDENTIFICATION IN A PRC1-LIKE COMPLEX</scope>
    <scope>SUBCELLULAR LOCATION</scope>
    <scope>INTERACTION WITH CBX6; CBX7 AND CBX8</scope>
</reference>
<reference key="5">
    <citation type="journal article" date="2015" name="Nat. Commun.">
        <title>BMI1-RING1B is an autoinhibited RING E3 ubiquitin ligase.</title>
        <authorList>
            <person name="Taherbhoy A.M."/>
            <person name="Huang O.W."/>
            <person name="Cochran A.G."/>
        </authorList>
    </citation>
    <scope>FUNCTION</scope>
    <scope>SUBUNIT</scope>
</reference>
<reference key="6">
    <citation type="journal article" date="2016" name="Structure">
        <title>KDM2B Recruitment of the Polycomb Group Complex, PRC1.1, Requires Cooperation between PCGF1 and BCORL1.</title>
        <authorList>
            <person name="Wong S.J."/>
            <person name="Gearhart M.D."/>
            <person name="Taylor A.B."/>
            <person name="Nanyes D.R."/>
            <person name="Ha D.J."/>
            <person name="Robinson A.K."/>
            <person name="Artigas J.A."/>
            <person name="Lee O.J."/>
            <person name="Demeler B."/>
            <person name="Hart P.J."/>
            <person name="Bardwell V.J."/>
            <person name="Kim C.A."/>
        </authorList>
    </citation>
    <scope>INTERACTION WITH BCORL1</scope>
</reference>
<sequence length="242" mass="28115">MLTRKIKLWDINAHITCRLCSGYLIDATTVTECLHTFCRSCLVKYLEENNTCPTCRIVIHQSHPLQYIGHDRTMQDIVYKLVPGLQEAEMRKQREFYHKLGMEVPGDIKGETCSAKQHLDSHRNGETKADDSSNKEAAEEKPEEDNDYHRSDEQVSICLECNSSKLRGLKRKWIRCSAQATVLHLKKFIAKKLNLSSFNELDILCNEEILGKDHTLKFVVVTRWRFKKAPLLLHYRPKMDLL</sequence>
<name>PCGF3_HUMAN</name>
<comment type="function">
    <text evidence="1 5">Component of a Polycomb group (PcG) multiprotein PRC1-like complex, a complex class required to maintain the transcriptionally repressive state of many genes, including Hox genes, throughout development. PcG PRC1 complex acts via chromatin remodeling and modification of histones; it mediates monoubiquitination of histone H2A 'Lys-119', rendering chromatin heritably changed in its expressibility. Within the PRC1-like complex, regulates RNF2 ubiquitin ligase activity (PubMed:26151332). Plays a redundant role with PCGF5 as part of a PRC1-like complex that mediates monoubiquitination of histone H2A 'Lys-119' on the X chromosome and is required for normal silencing of one copy of the X chromosome in XX females (By similarity).</text>
</comment>
<comment type="subunit">
    <text evidence="4 5 6">Component of a PRC1-like complex that contains PCGF3, RNF2 and RYBP (PubMed:21282530, PubMed:26151332). Interacts with CBX6, CBX7 and CBX8 (PubMed:21282530). Interacts with BCORL1 (PubMed:27568929).</text>
</comment>
<comment type="interaction">
    <interactant intactId="EBI-2339807">
        <id>Q3KNV8</id>
    </interactant>
    <interactant intactId="EBI-10208579">
        <id>Q6W2J9-4</id>
        <label>BCOR</label>
    </interactant>
    <organismsDiffer>false</organismsDiffer>
    <experiments>3</experiments>
</comment>
<comment type="interaction">
    <interactant intactId="EBI-2339807">
        <id>Q3KNV8</id>
    </interactant>
    <interactant intactId="EBI-3951758">
        <id>O95503</id>
        <label>CBX6</label>
    </interactant>
    <organismsDiffer>false</organismsDiffer>
    <experiments>2</experiments>
</comment>
<comment type="interaction">
    <interactant intactId="EBI-2339807">
        <id>Q3KNV8</id>
    </interactant>
    <interactant intactId="EBI-3923843">
        <id>O95931</id>
        <label>CBX7</label>
    </interactant>
    <organismsDiffer>false</organismsDiffer>
    <experiments>3</experiments>
</comment>
<comment type="interaction">
    <interactant intactId="EBI-2339807">
        <id>Q3KNV8</id>
    </interactant>
    <interactant intactId="EBI-712912">
        <id>Q9HC52</id>
        <label>CBX8</label>
    </interactant>
    <organismsDiffer>false</organismsDiffer>
    <experiments>4</experiments>
</comment>
<comment type="interaction">
    <interactant intactId="EBI-2339807">
        <id>Q3KNV8</id>
    </interactant>
    <interactant intactId="EBI-713786">
        <id>Q8IXK0</id>
        <label>PHC2</label>
    </interactant>
    <organismsDiffer>false</organismsDiffer>
    <experiments>3</experiments>
</comment>
<comment type="interaction">
    <interactant intactId="EBI-2339807">
        <id>Q3KNV8</id>
    </interactant>
    <interactant intactId="EBI-752313">
        <id>Q06587</id>
        <label>RING1</label>
    </interactant>
    <organismsDiffer>false</organismsDiffer>
    <experiments>5</experiments>
</comment>
<comment type="interaction">
    <interactant intactId="EBI-2339807">
        <id>Q3KNV8</id>
    </interactant>
    <interactant intactId="EBI-722416">
        <id>Q99496</id>
        <label>RNF2</label>
    </interactant>
    <organismsDiffer>false</organismsDiffer>
    <experiments>5</experiments>
</comment>
<comment type="interaction">
    <interactant intactId="EBI-12818023">
        <id>Q3KNV8-2</id>
    </interactant>
    <interactant intactId="EBI-725403">
        <id>P78364</id>
        <label>PHC1</label>
    </interactant>
    <organismsDiffer>false</organismsDiffer>
    <experiments>5</experiments>
</comment>
<comment type="interaction">
    <interactant intactId="EBI-12818023">
        <id>Q3KNV8-2</id>
    </interactant>
    <interactant intactId="EBI-752313">
        <id>Q06587</id>
        <label>RING1</label>
    </interactant>
    <organismsDiffer>false</organismsDiffer>
    <experiments>3</experiments>
</comment>
<comment type="interaction">
    <interactant intactId="EBI-12818023">
        <id>Q3KNV8-2</id>
    </interactant>
    <interactant intactId="EBI-722416">
        <id>Q99496</id>
        <label>RNF2</label>
    </interactant>
    <organismsDiffer>false</organismsDiffer>
    <experiments>3</experiments>
</comment>
<comment type="subcellular location">
    <subcellularLocation>
        <location evidence="4">Nucleus</location>
    </subcellularLocation>
    <subcellularLocation>
        <location evidence="1">Nucleus</location>
        <location evidence="1">Nucleoplasm</location>
    </subcellularLocation>
    <text evidence="1">Recruited by the non-coding RNA Xist to specific nuclear foci that probably correspond to the inactivated X chromosome.</text>
</comment>
<comment type="alternative products">
    <event type="alternative splicing"/>
    <isoform>
        <id>Q3KNV8-1</id>
        <name>1</name>
        <sequence type="displayed"/>
    </isoform>
    <isoform>
        <id>Q3KNV8-2</id>
        <name>2</name>
        <sequence type="described" ref="VSP_023115"/>
    </isoform>
</comment>
<feature type="chain" id="PRO_0000277864" description="Polycomb group RING finger protein 3">
    <location>
        <begin position="1"/>
        <end position="242"/>
    </location>
</feature>
<feature type="zinc finger region" description="RING-type" evidence="2">
    <location>
        <begin position="17"/>
        <end position="56"/>
    </location>
</feature>
<feature type="region of interest" description="Disordered" evidence="3">
    <location>
        <begin position="115"/>
        <end position="149"/>
    </location>
</feature>
<feature type="region of interest" description="Interaction with BCORL1" evidence="6">
    <location>
        <begin position="132"/>
        <end position="242"/>
    </location>
</feature>
<feature type="compositionally biased region" description="Basic and acidic residues" evidence="3">
    <location>
        <begin position="117"/>
        <end position="140"/>
    </location>
</feature>
<feature type="splice variant" id="VSP_023115" description="In isoform 2." evidence="7">
    <original>M</original>
    <variation>MEFPKM</variation>
    <location>
        <position position="1"/>
    </location>
</feature>
<protein>
    <recommendedName>
        <fullName>Polycomb group RING finger protein 3</fullName>
    </recommendedName>
    <alternativeName>
        <fullName>RING finger protein 3A</fullName>
    </alternativeName>
</protein>
<dbReference type="EMBL" id="AJ001019">
    <property type="protein sequence ID" value="CAA04477.1"/>
    <property type="molecule type" value="mRNA"/>
</dbReference>
<dbReference type="EMBL" id="CH471131">
    <property type="protein sequence ID" value="EAW82652.1"/>
    <property type="molecule type" value="Genomic_DNA"/>
</dbReference>
<dbReference type="EMBL" id="CH471131">
    <property type="protein sequence ID" value="EAW82653.1"/>
    <property type="molecule type" value="Genomic_DNA"/>
</dbReference>
<dbReference type="EMBL" id="CH471131">
    <property type="protein sequence ID" value="EAW82656.1"/>
    <property type="molecule type" value="Genomic_DNA"/>
</dbReference>
<dbReference type="EMBL" id="BC107061">
    <property type="protein sequence ID" value="AAI07062.1"/>
    <property type="molecule type" value="mRNA"/>
</dbReference>
<dbReference type="CCDS" id="CCDS3339.2">
    <molecule id="Q3KNV8-1"/>
</dbReference>
<dbReference type="RefSeq" id="NP_001304765.1">
    <molecule id="Q3KNV8-1"/>
    <property type="nucleotide sequence ID" value="NM_001317836.3"/>
</dbReference>
<dbReference type="RefSeq" id="NP_001382174.1">
    <molecule id="Q3KNV8-1"/>
    <property type="nucleotide sequence ID" value="NM_001395245.1"/>
</dbReference>
<dbReference type="RefSeq" id="NP_001382175.1">
    <molecule id="Q3KNV8-1"/>
    <property type="nucleotide sequence ID" value="NM_001395246.1"/>
</dbReference>
<dbReference type="RefSeq" id="NP_001382176.1">
    <molecule id="Q3KNV8-1"/>
    <property type="nucleotide sequence ID" value="NM_001395247.1"/>
</dbReference>
<dbReference type="RefSeq" id="NP_001382177.1">
    <molecule id="Q3KNV8-1"/>
    <property type="nucleotide sequence ID" value="NM_001395248.1"/>
</dbReference>
<dbReference type="RefSeq" id="NP_001382178.1">
    <molecule id="Q3KNV8-1"/>
    <property type="nucleotide sequence ID" value="NM_001395249.1"/>
</dbReference>
<dbReference type="RefSeq" id="NP_006306.2">
    <molecule id="Q3KNV8-1"/>
    <property type="nucleotide sequence ID" value="NM_006315.5"/>
</dbReference>
<dbReference type="SMR" id="Q3KNV8"/>
<dbReference type="BioGRID" id="115618">
    <property type="interactions" value="92"/>
</dbReference>
<dbReference type="ComplexPortal" id="CPX-2283">
    <property type="entry name" value="Non-canonical polycomb repressive complex 1.3, RING1-RYBP-CKIIA2 variant"/>
</dbReference>
<dbReference type="ComplexPortal" id="CPX-2285">
    <property type="entry name" value="Non-canonical polycomb repressive complex 1.3, RING1-RYBP-CKIIA1-A2 variant"/>
</dbReference>
<dbReference type="ComplexPortal" id="CPX-2286">
    <property type="entry name" value="Non-canonical polycomb repressive complex 1.3, RING1-RYBP-CKIIA1 variant"/>
</dbReference>
<dbReference type="ComplexPortal" id="CPX-2288">
    <property type="entry name" value="Non-canonical polycomb repressive complex 1.3, RING1-YAF2-CKIIA2 variant"/>
</dbReference>
<dbReference type="ComplexPortal" id="CPX-2289">
    <property type="entry name" value="Non-canonical polycomb repressive complex 1.3, RING1-YAF2-CKIIA1-A2 variant"/>
</dbReference>
<dbReference type="ComplexPortal" id="CPX-2290">
    <property type="entry name" value="Non-canonical polycomb repressive complex 1.3, RING1-YAF2-CKIIA1 variant"/>
</dbReference>
<dbReference type="ComplexPortal" id="CPX-2291">
    <property type="entry name" value="Non-canonical polycomb repressive complex 1.3, RING2-RYBP-CKIIA2 variant"/>
</dbReference>
<dbReference type="ComplexPortal" id="CPX-2292">
    <property type="entry name" value="Non-canonical polycomb repressive complex 1.3, RING2-RYBP-CKIIA1-A2 variant"/>
</dbReference>
<dbReference type="ComplexPortal" id="CPX-2295">
    <property type="entry name" value="Non-canonical polycomb repressive complex 1.3, RING2-RYBP-CKIIA1 variant"/>
</dbReference>
<dbReference type="ComplexPortal" id="CPX-2296">
    <property type="entry name" value="Non-canonical polycomb repressive complex 1.3, RING2-YAF2-CKIIA2 variant"/>
</dbReference>
<dbReference type="ComplexPortal" id="CPX-2297">
    <property type="entry name" value="Non-canonical polycomb repressive complex 1.3, RING2-YAF2-CKIIA1-A2 variant"/>
</dbReference>
<dbReference type="ComplexPortal" id="CPX-2298">
    <property type="entry name" value="Non-canonical polycomb repressive complex 1.3, RING2-YAF2-CKIIA1 variant"/>
</dbReference>
<dbReference type="CORUM" id="Q3KNV8"/>
<dbReference type="DIP" id="DIP-52782N"/>
<dbReference type="FunCoup" id="Q3KNV8">
    <property type="interactions" value="3037"/>
</dbReference>
<dbReference type="IntAct" id="Q3KNV8">
    <property type="interactions" value="48"/>
</dbReference>
<dbReference type="MINT" id="Q3KNV8"/>
<dbReference type="STRING" id="9606.ENSP00000354724"/>
<dbReference type="iPTMnet" id="Q3KNV8"/>
<dbReference type="PhosphoSitePlus" id="Q3KNV8"/>
<dbReference type="BioMuta" id="PCGF3"/>
<dbReference type="DMDM" id="121942537"/>
<dbReference type="jPOST" id="Q3KNV8"/>
<dbReference type="MassIVE" id="Q3KNV8"/>
<dbReference type="PaxDb" id="9606-ENSP00000354724"/>
<dbReference type="PeptideAtlas" id="Q3KNV8"/>
<dbReference type="ProteomicsDB" id="61705">
    <molecule id="Q3KNV8-1"/>
</dbReference>
<dbReference type="ProteomicsDB" id="61706">
    <molecule id="Q3KNV8-2"/>
</dbReference>
<dbReference type="Pumba" id="Q3KNV8"/>
<dbReference type="Antibodypedia" id="4972">
    <property type="antibodies" value="163 antibodies from 28 providers"/>
</dbReference>
<dbReference type="DNASU" id="10336"/>
<dbReference type="Ensembl" id="ENST00000362003.10">
    <molecule id="Q3KNV8-1"/>
    <property type="protein sequence ID" value="ENSP00000354724.5"/>
    <property type="gene ID" value="ENSG00000185619.19"/>
</dbReference>
<dbReference type="Ensembl" id="ENST00000470161.6">
    <molecule id="Q3KNV8-1"/>
    <property type="protein sequence ID" value="ENSP00000420489.2"/>
    <property type="gene ID" value="ENSG00000185619.19"/>
</dbReference>
<dbReference type="GeneID" id="10336"/>
<dbReference type="KEGG" id="hsa:10336"/>
<dbReference type="MANE-Select" id="ENST00000362003.10">
    <property type="protein sequence ID" value="ENSP00000354724.5"/>
    <property type="RefSeq nucleotide sequence ID" value="NM_006315.7"/>
    <property type="RefSeq protein sequence ID" value="NP_006306.2"/>
</dbReference>
<dbReference type="UCSC" id="uc003gbe.4">
    <molecule id="Q3KNV8-1"/>
    <property type="organism name" value="human"/>
</dbReference>
<dbReference type="AGR" id="HGNC:10066"/>
<dbReference type="CTD" id="10336"/>
<dbReference type="DisGeNET" id="10336"/>
<dbReference type="GeneCards" id="PCGF3"/>
<dbReference type="HGNC" id="HGNC:10066">
    <property type="gene designation" value="PCGF3"/>
</dbReference>
<dbReference type="HPA" id="ENSG00000185619">
    <property type="expression patterns" value="Low tissue specificity"/>
</dbReference>
<dbReference type="neXtProt" id="NX_Q3KNV8"/>
<dbReference type="OpenTargets" id="ENSG00000185619"/>
<dbReference type="PharmGKB" id="PA34433"/>
<dbReference type="VEuPathDB" id="HostDB:ENSG00000185619"/>
<dbReference type="eggNOG" id="KOG2660">
    <property type="taxonomic scope" value="Eukaryota"/>
</dbReference>
<dbReference type="GeneTree" id="ENSGT00940000158395"/>
<dbReference type="HOGENOM" id="CLU_046427_4_1_1"/>
<dbReference type="InParanoid" id="Q3KNV8"/>
<dbReference type="OMA" id="EHITCEI"/>
<dbReference type="OrthoDB" id="1305878at2759"/>
<dbReference type="PAN-GO" id="Q3KNV8">
    <property type="GO annotations" value="3 GO annotations based on evolutionary models"/>
</dbReference>
<dbReference type="PhylomeDB" id="Q3KNV8"/>
<dbReference type="TreeFam" id="TF324206"/>
<dbReference type="PathwayCommons" id="Q3KNV8"/>
<dbReference type="SignaLink" id="Q3KNV8"/>
<dbReference type="SIGNOR" id="Q3KNV8"/>
<dbReference type="BioGRID-ORCS" id="10336">
    <property type="hits" value="20 hits in 1198 CRISPR screens"/>
</dbReference>
<dbReference type="ChiTaRS" id="PCGF3">
    <property type="organism name" value="human"/>
</dbReference>
<dbReference type="GenomeRNAi" id="10336"/>
<dbReference type="Pharos" id="Q3KNV8">
    <property type="development level" value="Tbio"/>
</dbReference>
<dbReference type="PRO" id="PR:Q3KNV8"/>
<dbReference type="Proteomes" id="UP000005640">
    <property type="component" value="Chromosome 4"/>
</dbReference>
<dbReference type="RNAct" id="Q3KNV8">
    <property type="molecule type" value="protein"/>
</dbReference>
<dbReference type="Bgee" id="ENSG00000185619">
    <property type="expression patterns" value="Expressed in sural nerve and 196 other cell types or tissues"/>
</dbReference>
<dbReference type="ExpressionAtlas" id="Q3KNV8">
    <property type="expression patterns" value="baseline and differential"/>
</dbReference>
<dbReference type="GO" id="GO:0005654">
    <property type="term" value="C:nucleoplasm"/>
    <property type="evidence" value="ECO:0000314"/>
    <property type="project" value="HPA"/>
</dbReference>
<dbReference type="GO" id="GO:0005634">
    <property type="term" value="C:nucleus"/>
    <property type="evidence" value="ECO:0000314"/>
    <property type="project" value="UniProtKB"/>
</dbReference>
<dbReference type="GO" id="GO:0031519">
    <property type="term" value="C:PcG protein complex"/>
    <property type="evidence" value="ECO:0000314"/>
    <property type="project" value="UniProtKB"/>
</dbReference>
<dbReference type="GO" id="GO:0035102">
    <property type="term" value="C:PRC1 complex"/>
    <property type="evidence" value="ECO:0000318"/>
    <property type="project" value="GO_Central"/>
</dbReference>
<dbReference type="GO" id="GO:0000805">
    <property type="term" value="C:X chromosome"/>
    <property type="evidence" value="ECO:0007669"/>
    <property type="project" value="Ensembl"/>
</dbReference>
<dbReference type="GO" id="GO:0140862">
    <property type="term" value="F:histone H2AK119 ubiquitin ligase activity"/>
    <property type="evidence" value="ECO:0000250"/>
    <property type="project" value="UniProtKB"/>
</dbReference>
<dbReference type="GO" id="GO:0008270">
    <property type="term" value="F:zinc ion binding"/>
    <property type="evidence" value="ECO:0007669"/>
    <property type="project" value="UniProtKB-KW"/>
</dbReference>
<dbReference type="GO" id="GO:0060816">
    <property type="term" value="P:random inactivation of X chromosome"/>
    <property type="evidence" value="ECO:0000250"/>
    <property type="project" value="UniProtKB"/>
</dbReference>
<dbReference type="GO" id="GO:0006357">
    <property type="term" value="P:regulation of transcription by RNA polymerase II"/>
    <property type="evidence" value="ECO:0000318"/>
    <property type="project" value="GO_Central"/>
</dbReference>
<dbReference type="CDD" id="cd17083">
    <property type="entry name" value="RAWUL_PCGF3"/>
    <property type="match status" value="1"/>
</dbReference>
<dbReference type="CDD" id="cd16735">
    <property type="entry name" value="RING-HC_PCGF3"/>
    <property type="match status" value="1"/>
</dbReference>
<dbReference type="FunFam" id="3.10.20.90:FF:000073">
    <property type="entry name" value="Polycomb group RING finger protein 3"/>
    <property type="match status" value="1"/>
</dbReference>
<dbReference type="FunFam" id="3.30.40.10:FF:000033">
    <property type="entry name" value="Polycomb group RING finger protein 3"/>
    <property type="match status" value="1"/>
</dbReference>
<dbReference type="Gene3D" id="3.10.20.90">
    <property type="entry name" value="Phosphatidylinositol 3-kinase Catalytic Subunit, Chain A, domain 1"/>
    <property type="match status" value="1"/>
</dbReference>
<dbReference type="Gene3D" id="3.30.40.10">
    <property type="entry name" value="Zinc/RING finger domain, C3HC4 (zinc finger)"/>
    <property type="match status" value="1"/>
</dbReference>
<dbReference type="InterPro" id="IPR051507">
    <property type="entry name" value="PcG_RING_finger"/>
</dbReference>
<dbReference type="InterPro" id="IPR032443">
    <property type="entry name" value="RAWUL"/>
</dbReference>
<dbReference type="InterPro" id="IPR001841">
    <property type="entry name" value="Znf_RING"/>
</dbReference>
<dbReference type="InterPro" id="IPR013083">
    <property type="entry name" value="Znf_RING/FYVE/PHD"/>
</dbReference>
<dbReference type="InterPro" id="IPR017907">
    <property type="entry name" value="Znf_RING_CS"/>
</dbReference>
<dbReference type="PANTHER" id="PTHR45893">
    <property type="entry name" value="POLYCOMB GROUP RING FINGER PROTEIN"/>
    <property type="match status" value="1"/>
</dbReference>
<dbReference type="Pfam" id="PF16207">
    <property type="entry name" value="RAWUL"/>
    <property type="match status" value="1"/>
</dbReference>
<dbReference type="Pfam" id="PF13923">
    <property type="entry name" value="zf-C3HC4_2"/>
    <property type="match status" value="1"/>
</dbReference>
<dbReference type="SMART" id="SM00184">
    <property type="entry name" value="RING"/>
    <property type="match status" value="1"/>
</dbReference>
<dbReference type="SUPFAM" id="SSF57850">
    <property type="entry name" value="RING/U-box"/>
    <property type="match status" value="1"/>
</dbReference>
<dbReference type="PROSITE" id="PS00518">
    <property type="entry name" value="ZF_RING_1"/>
    <property type="match status" value="1"/>
</dbReference>
<dbReference type="PROSITE" id="PS50089">
    <property type="entry name" value="ZF_RING_2"/>
    <property type="match status" value="1"/>
</dbReference>
<organism>
    <name type="scientific">Homo sapiens</name>
    <name type="common">Human</name>
    <dbReference type="NCBI Taxonomy" id="9606"/>
    <lineage>
        <taxon>Eukaryota</taxon>
        <taxon>Metazoa</taxon>
        <taxon>Chordata</taxon>
        <taxon>Craniata</taxon>
        <taxon>Vertebrata</taxon>
        <taxon>Euteleostomi</taxon>
        <taxon>Mammalia</taxon>
        <taxon>Eutheria</taxon>
        <taxon>Euarchontoglires</taxon>
        <taxon>Primates</taxon>
        <taxon>Haplorrhini</taxon>
        <taxon>Catarrhini</taxon>
        <taxon>Hominidae</taxon>
        <taxon>Homo</taxon>
    </lineage>
</organism>
<gene>
    <name type="primary">PCGF3</name>
    <name type="synonym">RNF3</name>
    <name type="synonym">RNF3A</name>
</gene>
<keyword id="KW-0025">Alternative splicing</keyword>
<keyword id="KW-0479">Metal-binding</keyword>
<keyword id="KW-0539">Nucleus</keyword>
<keyword id="KW-1267">Proteomics identification</keyword>
<keyword id="KW-1185">Reference proteome</keyword>
<keyword id="KW-0678">Repressor</keyword>
<keyword id="KW-0804">Transcription</keyword>
<keyword id="KW-0805">Transcription regulation</keyword>
<keyword id="KW-0862">Zinc</keyword>
<keyword id="KW-0863">Zinc-finger</keyword>
<proteinExistence type="evidence at protein level"/>